<evidence type="ECO:0000269" key="1">
    <source>
    </source>
</evidence>
<evidence type="ECO:0000303" key="2">
    <source>
    </source>
</evidence>
<evidence type="ECO:0000305" key="3"/>
<organism>
    <name type="scientific">Oryza sativa subsp. japonica</name>
    <name type="common">Rice</name>
    <dbReference type="NCBI Taxonomy" id="39947"/>
    <lineage>
        <taxon>Eukaryota</taxon>
        <taxon>Viridiplantae</taxon>
        <taxon>Streptophyta</taxon>
        <taxon>Embryophyta</taxon>
        <taxon>Tracheophyta</taxon>
        <taxon>Spermatophyta</taxon>
        <taxon>Magnoliopsida</taxon>
        <taxon>Liliopsida</taxon>
        <taxon>Poales</taxon>
        <taxon>Poaceae</taxon>
        <taxon>BOP clade</taxon>
        <taxon>Oryzoideae</taxon>
        <taxon>Oryzeae</taxon>
        <taxon>Oryzinae</taxon>
        <taxon>Oryza</taxon>
        <taxon>Oryza sativa</taxon>
    </lineage>
</organism>
<name>TLP6_ORYSJ</name>
<keyword id="KW-0025">Alternative splicing</keyword>
<keyword id="KW-1185">Reference proteome</keyword>
<proteinExistence type="evidence at transcript level"/>
<gene>
    <name type="primary">TULP6</name>
    <name type="synonym">TULP14</name>
    <name type="ordered locus">Os03g0351400</name>
    <name type="ordered locus">LOC_Os03g22800</name>
    <name type="ORF">OsJ_010398</name>
</gene>
<reference key="1">
    <citation type="journal article" date="2005" name="Genome Res.">
        <title>Sequence, annotation, and analysis of synteny between rice chromosome 3 and diverged grass species.</title>
        <authorList>
            <consortium name="The rice chromosome 3 sequencing consortium"/>
            <person name="Buell C.R."/>
            <person name="Yuan Q."/>
            <person name="Ouyang S."/>
            <person name="Liu J."/>
            <person name="Zhu W."/>
            <person name="Wang A."/>
            <person name="Maiti R."/>
            <person name="Haas B."/>
            <person name="Wortman J."/>
            <person name="Pertea M."/>
            <person name="Jones K.M."/>
            <person name="Kim M."/>
            <person name="Overton L."/>
            <person name="Tsitrin T."/>
            <person name="Fadrosh D."/>
            <person name="Bera J."/>
            <person name="Weaver B."/>
            <person name="Jin S."/>
            <person name="Johri S."/>
            <person name="Reardon M."/>
            <person name="Webb K."/>
            <person name="Hill J."/>
            <person name="Moffat K."/>
            <person name="Tallon L."/>
            <person name="Van Aken S."/>
            <person name="Lewis M."/>
            <person name="Utterback T."/>
            <person name="Feldblyum T."/>
            <person name="Zismann V."/>
            <person name="Iobst S."/>
            <person name="Hsiao J."/>
            <person name="de Vazeille A.R."/>
            <person name="Salzberg S.L."/>
            <person name="White O."/>
            <person name="Fraser C.M."/>
            <person name="Yu Y."/>
            <person name="Kim H."/>
            <person name="Rambo T."/>
            <person name="Currie J."/>
            <person name="Collura K."/>
            <person name="Kernodle-Thompson S."/>
            <person name="Wei F."/>
            <person name="Kudrna K."/>
            <person name="Ammiraju J.S.S."/>
            <person name="Luo M."/>
            <person name="Goicoechea J.L."/>
            <person name="Wing R.A."/>
            <person name="Henry D."/>
            <person name="Oates R."/>
            <person name="Palmer M."/>
            <person name="Pries G."/>
            <person name="Saski C."/>
            <person name="Simmons J."/>
            <person name="Soderlund C."/>
            <person name="Nelson W."/>
            <person name="de la Bastide M."/>
            <person name="Spiegel L."/>
            <person name="Nascimento L."/>
            <person name="Huang E."/>
            <person name="Preston R."/>
            <person name="Zutavern T."/>
            <person name="Palmer L."/>
            <person name="O'Shaughnessy A."/>
            <person name="Dike S."/>
            <person name="McCombie W.R."/>
            <person name="Minx P."/>
            <person name="Cordum H."/>
            <person name="Wilson R."/>
            <person name="Jin W."/>
            <person name="Lee H.R."/>
            <person name="Jiang J."/>
            <person name="Jackson S."/>
        </authorList>
    </citation>
    <scope>NUCLEOTIDE SEQUENCE [LARGE SCALE GENOMIC DNA]</scope>
    <source>
        <strain>cv. Nipponbare</strain>
    </source>
</reference>
<reference key="2">
    <citation type="journal article" date="2005" name="Nature">
        <title>The map-based sequence of the rice genome.</title>
        <authorList>
            <consortium name="International rice genome sequencing project (IRGSP)"/>
        </authorList>
    </citation>
    <scope>NUCLEOTIDE SEQUENCE [LARGE SCALE GENOMIC DNA]</scope>
    <source>
        <strain>cv. Nipponbare</strain>
    </source>
</reference>
<reference key="3">
    <citation type="journal article" date="2008" name="Nucleic Acids Res.">
        <title>The rice annotation project database (RAP-DB): 2008 update.</title>
        <authorList>
            <consortium name="The rice annotation project (RAP)"/>
        </authorList>
    </citation>
    <scope>GENOME REANNOTATION</scope>
    <source>
        <strain>cv. Nipponbare</strain>
    </source>
</reference>
<reference key="4">
    <citation type="journal article" date="2013" name="Rice">
        <title>Improvement of the Oryza sativa Nipponbare reference genome using next generation sequence and optical map data.</title>
        <authorList>
            <person name="Kawahara Y."/>
            <person name="de la Bastide M."/>
            <person name="Hamilton J.P."/>
            <person name="Kanamori H."/>
            <person name="McCombie W.R."/>
            <person name="Ouyang S."/>
            <person name="Schwartz D.C."/>
            <person name="Tanaka T."/>
            <person name="Wu J."/>
            <person name="Zhou S."/>
            <person name="Childs K.L."/>
            <person name="Davidson R.M."/>
            <person name="Lin H."/>
            <person name="Quesada-Ocampo L."/>
            <person name="Vaillancourt B."/>
            <person name="Sakai H."/>
            <person name="Lee S.S."/>
            <person name="Kim J."/>
            <person name="Numa H."/>
            <person name="Itoh T."/>
            <person name="Buell C.R."/>
            <person name="Matsumoto T."/>
        </authorList>
    </citation>
    <scope>GENOME REANNOTATION</scope>
    <source>
        <strain>cv. Nipponbare</strain>
    </source>
</reference>
<reference key="5">
    <citation type="journal article" date="2005" name="PLoS Biol.">
        <title>The genomes of Oryza sativa: a history of duplications.</title>
        <authorList>
            <person name="Yu J."/>
            <person name="Wang J."/>
            <person name="Lin W."/>
            <person name="Li S."/>
            <person name="Li H."/>
            <person name="Zhou J."/>
            <person name="Ni P."/>
            <person name="Dong W."/>
            <person name="Hu S."/>
            <person name="Zeng C."/>
            <person name="Zhang J."/>
            <person name="Zhang Y."/>
            <person name="Li R."/>
            <person name="Xu Z."/>
            <person name="Li S."/>
            <person name="Li X."/>
            <person name="Zheng H."/>
            <person name="Cong L."/>
            <person name="Lin L."/>
            <person name="Yin J."/>
            <person name="Geng J."/>
            <person name="Li G."/>
            <person name="Shi J."/>
            <person name="Liu J."/>
            <person name="Lv H."/>
            <person name="Li J."/>
            <person name="Wang J."/>
            <person name="Deng Y."/>
            <person name="Ran L."/>
            <person name="Shi X."/>
            <person name="Wang X."/>
            <person name="Wu Q."/>
            <person name="Li C."/>
            <person name="Ren X."/>
            <person name="Wang J."/>
            <person name="Wang X."/>
            <person name="Li D."/>
            <person name="Liu D."/>
            <person name="Zhang X."/>
            <person name="Ji Z."/>
            <person name="Zhao W."/>
            <person name="Sun Y."/>
            <person name="Zhang Z."/>
            <person name="Bao J."/>
            <person name="Han Y."/>
            <person name="Dong L."/>
            <person name="Ji J."/>
            <person name="Chen P."/>
            <person name="Wu S."/>
            <person name="Liu J."/>
            <person name="Xiao Y."/>
            <person name="Bu D."/>
            <person name="Tan J."/>
            <person name="Yang L."/>
            <person name="Ye C."/>
            <person name="Zhang J."/>
            <person name="Xu J."/>
            <person name="Zhou Y."/>
            <person name="Yu Y."/>
            <person name="Zhang B."/>
            <person name="Zhuang S."/>
            <person name="Wei H."/>
            <person name="Liu B."/>
            <person name="Lei M."/>
            <person name="Yu H."/>
            <person name="Li Y."/>
            <person name="Xu H."/>
            <person name="Wei S."/>
            <person name="He X."/>
            <person name="Fang L."/>
            <person name="Zhang Z."/>
            <person name="Zhang Y."/>
            <person name="Huang X."/>
            <person name="Su Z."/>
            <person name="Tong W."/>
            <person name="Li J."/>
            <person name="Tong Z."/>
            <person name="Li S."/>
            <person name="Ye J."/>
            <person name="Wang L."/>
            <person name="Fang L."/>
            <person name="Lei T."/>
            <person name="Chen C.-S."/>
            <person name="Chen H.-C."/>
            <person name="Xu Z."/>
            <person name="Li H."/>
            <person name="Huang H."/>
            <person name="Zhang F."/>
            <person name="Xu H."/>
            <person name="Li N."/>
            <person name="Zhao C."/>
            <person name="Li S."/>
            <person name="Dong L."/>
            <person name="Huang Y."/>
            <person name="Li L."/>
            <person name="Xi Y."/>
            <person name="Qi Q."/>
            <person name="Li W."/>
            <person name="Zhang B."/>
            <person name="Hu W."/>
            <person name="Zhang Y."/>
            <person name="Tian X."/>
            <person name="Jiao Y."/>
            <person name="Liang X."/>
            <person name="Jin J."/>
            <person name="Gao L."/>
            <person name="Zheng W."/>
            <person name="Hao B."/>
            <person name="Liu S.-M."/>
            <person name="Wang W."/>
            <person name="Yuan L."/>
            <person name="Cao M."/>
            <person name="McDermott J."/>
            <person name="Samudrala R."/>
            <person name="Wang J."/>
            <person name="Wong G.K.-S."/>
            <person name="Yang H."/>
        </authorList>
    </citation>
    <scope>NUCLEOTIDE SEQUENCE [LARGE SCALE GENOMIC DNA]</scope>
    <source>
        <strain>cv. Nipponbare</strain>
    </source>
</reference>
<reference key="6">
    <citation type="journal article" date="2003" name="Science">
        <title>Collection, mapping, and annotation of over 28,000 cDNA clones from japonica rice.</title>
        <authorList>
            <consortium name="The rice full-length cDNA consortium"/>
        </authorList>
    </citation>
    <scope>NUCLEOTIDE SEQUENCE [LARGE SCALE MRNA] (ISOFORM 2)</scope>
    <source>
        <strain>cv. Nipponbare</strain>
    </source>
</reference>
<reference key="7">
    <citation type="journal article" date="2008" name="FEBS J.">
        <title>Identification of rice TUBBY-like genes and their evolution.</title>
        <authorList>
            <person name="Liu Q."/>
        </authorList>
    </citation>
    <scope>GENE FAMILY</scope>
    <scope>NOMENCLATURE</scope>
</reference>
<reference key="8">
    <citation type="journal article" date="2008" name="Genomics">
        <title>Genomewide comparative phylogenetic and molecular evolutionary analysis of tubby-like protein family in Arabidopsis, rice, and poplar.</title>
        <authorList>
            <person name="Yang Z."/>
            <person name="Zhou Y."/>
            <person name="Wang X."/>
            <person name="Gu S."/>
            <person name="Yu J."/>
            <person name="Liang G."/>
            <person name="Yan C."/>
            <person name="Xu C."/>
        </authorList>
    </citation>
    <scope>TISSUE SPECIFICITY</scope>
    <scope>GENE FAMILY</scope>
    <scope>NOMENCLATURE</scope>
</reference>
<dbReference type="EMBL" id="DP000009">
    <property type="protein sequence ID" value="ABF95934.1"/>
    <property type="molecule type" value="Genomic_DNA"/>
</dbReference>
<dbReference type="EMBL" id="DP000009">
    <property type="protein sequence ID" value="ABF95936.1"/>
    <property type="molecule type" value="Genomic_DNA"/>
</dbReference>
<dbReference type="EMBL" id="AP008209">
    <property type="protein sequence ID" value="BAF12031.1"/>
    <property type="status" value="ALT_SEQ"/>
    <property type="molecule type" value="Genomic_DNA"/>
</dbReference>
<dbReference type="EMBL" id="AP014959">
    <property type="status" value="NOT_ANNOTATED_CDS"/>
    <property type="molecule type" value="Genomic_DNA"/>
</dbReference>
<dbReference type="EMBL" id="CM000140">
    <property type="protein sequence ID" value="EAZ26915.1"/>
    <property type="molecule type" value="Genomic_DNA"/>
</dbReference>
<dbReference type="EMBL" id="AK102370">
    <property type="status" value="NOT_ANNOTATED_CDS"/>
    <property type="molecule type" value="mRNA"/>
</dbReference>
<dbReference type="RefSeq" id="XP_015631451.1">
    <property type="nucleotide sequence ID" value="XM_015775965.1"/>
</dbReference>
<dbReference type="RefSeq" id="XP_015631452.1">
    <property type="nucleotide sequence ID" value="XM_015775966.1"/>
</dbReference>
<dbReference type="SMR" id="Q10LG8"/>
<dbReference type="FunCoup" id="Q10LG8">
    <property type="interactions" value="2224"/>
</dbReference>
<dbReference type="STRING" id="39947.Q10LG8"/>
<dbReference type="PaxDb" id="39947-Q10LG8"/>
<dbReference type="KEGG" id="dosa:Os03g0351400"/>
<dbReference type="eggNOG" id="KOG2502">
    <property type="taxonomic scope" value="Eukaryota"/>
</dbReference>
<dbReference type="InParanoid" id="Q10LG8"/>
<dbReference type="OrthoDB" id="8775810at2759"/>
<dbReference type="Proteomes" id="UP000000763">
    <property type="component" value="Chromosome 3"/>
</dbReference>
<dbReference type="Proteomes" id="UP000007752">
    <property type="component" value="Chromosome 3"/>
</dbReference>
<dbReference type="Proteomes" id="UP000059680">
    <property type="component" value="Chromosome 3"/>
</dbReference>
<dbReference type="CDD" id="cd22153">
    <property type="entry name" value="F-box_AtTLP-like"/>
    <property type="match status" value="1"/>
</dbReference>
<dbReference type="FunFam" id="3.20.90.10:FF:000003">
    <property type="entry name" value="Tubby-like F-box protein"/>
    <property type="match status" value="1"/>
</dbReference>
<dbReference type="Gene3D" id="1.20.1280.50">
    <property type="match status" value="1"/>
</dbReference>
<dbReference type="Gene3D" id="3.20.90.10">
    <property type="entry name" value="Tubby Protein, Chain A"/>
    <property type="match status" value="1"/>
</dbReference>
<dbReference type="InterPro" id="IPR036047">
    <property type="entry name" value="F-box-like_dom_sf"/>
</dbReference>
<dbReference type="InterPro" id="IPR025659">
    <property type="entry name" value="Tubby-like_C"/>
</dbReference>
<dbReference type="InterPro" id="IPR000007">
    <property type="entry name" value="Tubby_C"/>
</dbReference>
<dbReference type="InterPro" id="IPR018066">
    <property type="entry name" value="Tubby_C_CS"/>
</dbReference>
<dbReference type="PANTHER" id="PTHR16517:SF158">
    <property type="entry name" value="TUBBY-LIKE F-BOX PROTEIN 9"/>
    <property type="match status" value="1"/>
</dbReference>
<dbReference type="PANTHER" id="PTHR16517">
    <property type="entry name" value="TUBBY-RELATED"/>
    <property type="match status" value="1"/>
</dbReference>
<dbReference type="Pfam" id="PF01167">
    <property type="entry name" value="Tub"/>
    <property type="match status" value="1"/>
</dbReference>
<dbReference type="PRINTS" id="PR01573">
    <property type="entry name" value="SUPERTUBBY"/>
</dbReference>
<dbReference type="SUPFAM" id="SSF81383">
    <property type="entry name" value="F-box domain"/>
    <property type="match status" value="1"/>
</dbReference>
<dbReference type="SUPFAM" id="SSF54518">
    <property type="entry name" value="Tubby C-terminal domain-like"/>
    <property type="match status" value="1"/>
</dbReference>
<dbReference type="PROSITE" id="PS01200">
    <property type="entry name" value="TUB_1"/>
    <property type="match status" value="1"/>
</dbReference>
<sequence>MSFRSLIQEMRDEFGSISRHSLRSRSHRGGGGAPRVAAVGPAEAAAMQQSCWAQLPPELLREVLVRIEESEVWWPSRRDVVACAGVCRSWRGITKEIVRVPEASGKLTFPISLKQPGPRDGTLKCFIRRNRTTQTYYLYIGLTEALADDGKFLLAARKCRKPTCTDYLISLDMSDMSKGSNTYIGKLRSNFLGTKFTVYDAHPPYDGAVVSKSRSARVVGLNQVSPRVPAGNYPVSHISYELNVLGARGPRRMNCIMDSIPTSAVQEGGKAPTQTEFPLSGLDSFPSISFFRSKSARIDSATSQLSTQKEEKLVLKNKSPRWHEQLQCWCLNFRGRVTVASVKNFQLVASDENGPTNQEQDKVILQFGKIGKDLFTMDYRYPISAFQSFAICLSSFDTKIACE</sequence>
<protein>
    <recommendedName>
        <fullName>Tubby-like F-box protein 6</fullName>
        <shortName>OsTLP6</shortName>
    </recommendedName>
    <alternativeName>
        <fullName>Tubby-like F-box protein 14</fullName>
        <shortName>OsTLP14</shortName>
    </alternativeName>
</protein>
<comment type="alternative products">
    <event type="alternative splicing"/>
    <isoform>
        <id>Q10LG8-1</id>
        <name>1</name>
        <sequence type="displayed"/>
    </isoform>
    <isoform>
        <id>Q10LG8-2</id>
        <name>2</name>
        <sequence type="described" ref="VSP_035469"/>
    </isoform>
</comment>
<comment type="tissue specificity">
    <text evidence="1">Ubiquitous.</text>
</comment>
<comment type="similarity">
    <text evidence="3">Belongs to the TUB family.</text>
</comment>
<comment type="sequence caution" evidence="3">
    <conflict type="erroneous gene model prediction">
        <sequence resource="EMBL-CDS" id="BAF12031"/>
    </conflict>
</comment>
<feature type="chain" id="PRO_0000351125" description="Tubby-like F-box protein 6">
    <location>
        <begin position="1"/>
        <end position="403"/>
    </location>
</feature>
<feature type="domain" description="F-box">
    <location>
        <begin position="50"/>
        <end position="105"/>
    </location>
</feature>
<feature type="splice variant" id="VSP_035469" description="In isoform 2." evidence="2">
    <location>
        <begin position="1"/>
        <end position="172"/>
    </location>
</feature>
<accession>Q10LG8</accession>
<accession>Q0DRV7</accession>
<accession>Q10LG7</accession>